<sequence>MVVTTEAVTSRSERDAEPVQEPLVEKLATEELNILVAVRCRGRNEREIKAKSSVVVDVPDNGVTNEVSINTTDDVGIAAKMNSKTYTVDKVFGPSASQKLVYEEIAEPLFQDFIKGYNCTILVYGMTSTGKTYTMTGDEKLHNGELGDAAGIIPRVLFELFDTLEANKDDYLVKCSFVELYNEELKDLLDSTNTATNSDNKKLRIFDSNVNGTSASGSSSRSSSRNNSPRSAPDNSRAQMLRRKLGRHNTTGNSKISNNNHNKFSRFKQTSQESTRAHASNNHQNVHIPNNNSNNTNQQQSPIDQSASIYIQNLEEFHITSAMEGLQLLQKGLKQRQVASTKMNDFSSRSHSIFTITLYKEQNGELFRVSKMNLVDLAGSENISRSGAMNQRAKEAGSINQSLLTLGRVINSLADKSEHIPFRESKLTRLLQDSLGGNTKTALIATISPAKMTSEETCSTLEYASKAKNIKNKPQLGAFIMKDILVRSITSELAKIKSDLLSTKSKEGVYMSHEHYKDLHYDIECYKTELEESKRAIESLTAQNAMLQQERLSLKDDNACYKANIASLKDNVVTLQSSLKEQITKETNIRSLLKDVQGANEEMKKTIHLFEFKQQELQQSISTFISDEISNIRDTLKKHIEYLQNNGDLKDTEISGNLMRLEKEVVKVIKAAEEEASKSYGECVKMMLKETPRLFESVSGRLDNISKLAEENHSKIAETLSDVSEEYNNLKQYLTNNFFKNNHEELLSHHVQNTYAQLEENSAQLMQNFTMMLDKHIQENKRHMLENILGVTDEVINNELQMFGEQRAKWEKSSALINQCDSVNHSFHQALGSNLVEIRDVVSSSRDNIGATISSIQSRTRNRQSIEEMIQGNDVIRQQITRIKQKNKSLSLFKEHSTETATTSIGSVNKVEGNLKVIMDKVLNDPQLSRGKAEVPDEELHRLEKIPLGITNKENVVDLQHRYPALQEKRKPEDEVLLQAKLQRRNPD</sequence>
<protein>
    <recommendedName>
        <fullName>Kinesin-like protein CIN8</fullName>
    </recommendedName>
</protein>
<gene>
    <name type="primary">CIN8</name>
    <name type="ordered locus">CAGL0B03641g</name>
</gene>
<accession>Q6FXI5</accession>
<proteinExistence type="inferred from homology"/>
<evidence type="ECO:0000250" key="1">
    <source>
        <dbReference type="UniProtKB" id="P27895"/>
    </source>
</evidence>
<evidence type="ECO:0000255" key="2"/>
<evidence type="ECO:0000255" key="3">
    <source>
        <dbReference type="PROSITE-ProRule" id="PRU00283"/>
    </source>
</evidence>
<evidence type="ECO:0000256" key="4">
    <source>
        <dbReference type="SAM" id="MobiDB-lite"/>
    </source>
</evidence>
<feature type="chain" id="PRO_0000125366" description="Kinesin-like protein CIN8">
    <location>
        <begin position="1"/>
        <end position="988"/>
    </location>
</feature>
<feature type="domain" description="Kinesin motor" evidence="3">
    <location>
        <begin position="33"/>
        <end position="470"/>
    </location>
</feature>
<feature type="region of interest" description="Disordered" evidence="4">
    <location>
        <begin position="206"/>
        <end position="301"/>
    </location>
</feature>
<feature type="region of interest" description="Disordered" evidence="4">
    <location>
        <begin position="965"/>
        <end position="988"/>
    </location>
</feature>
<feature type="coiled-coil region" evidence="2">
    <location>
        <begin position="514"/>
        <end position="619"/>
    </location>
</feature>
<feature type="coiled-coil region" evidence="2">
    <location>
        <begin position="707"/>
        <end position="769"/>
    </location>
</feature>
<feature type="compositionally biased region" description="Low complexity" evidence="4">
    <location>
        <begin position="208"/>
        <end position="237"/>
    </location>
</feature>
<feature type="compositionally biased region" description="Polar residues" evidence="4">
    <location>
        <begin position="248"/>
        <end position="280"/>
    </location>
</feature>
<feature type="compositionally biased region" description="Low complexity" evidence="4">
    <location>
        <begin position="281"/>
        <end position="301"/>
    </location>
</feature>
<feature type="compositionally biased region" description="Basic and acidic residues" evidence="4">
    <location>
        <begin position="965"/>
        <end position="974"/>
    </location>
</feature>
<feature type="binding site" evidence="3">
    <location>
        <begin position="125"/>
        <end position="132"/>
    </location>
    <ligand>
        <name>ATP</name>
        <dbReference type="ChEBI" id="CHEBI:30616"/>
    </ligand>
</feature>
<comment type="function">
    <text evidence="1">Elongates the mitotic spindle by interacting with spindle microtubules to generate an outward force pushing spindle poles apart (By similarity). Following spindle assembly, CIN8 and KIP1 apparently act to oppose a force, possibly generated by KAR3, that draws separated poles back together (By similarity).</text>
</comment>
<comment type="subcellular location">
    <subcellularLocation>
        <location evidence="1">Cytoplasm</location>
        <location evidence="1">Cytoskeleton</location>
        <location evidence="1">Spindle</location>
    </subcellularLocation>
    <text evidence="1">Spindle microtubules that lie between the poles.</text>
</comment>
<comment type="similarity">
    <text evidence="3">Belongs to the TRAFAC class myosin-kinesin ATPase superfamily. Kinesin family. BimC subfamily.</text>
</comment>
<keyword id="KW-0067">ATP-binding</keyword>
<keyword id="KW-0131">Cell cycle</keyword>
<keyword id="KW-0132">Cell division</keyword>
<keyword id="KW-0175">Coiled coil</keyword>
<keyword id="KW-0963">Cytoplasm</keyword>
<keyword id="KW-0206">Cytoskeleton</keyword>
<keyword id="KW-0493">Microtubule</keyword>
<keyword id="KW-0498">Mitosis</keyword>
<keyword id="KW-0505">Motor protein</keyword>
<keyword id="KW-0547">Nucleotide-binding</keyword>
<keyword id="KW-1185">Reference proteome</keyword>
<dbReference type="EMBL" id="CR380948">
    <property type="protein sequence ID" value="CAG58030.1"/>
    <property type="molecule type" value="Genomic_DNA"/>
</dbReference>
<dbReference type="RefSeq" id="XP_445130.1">
    <property type="nucleotide sequence ID" value="XM_445130.1"/>
</dbReference>
<dbReference type="SMR" id="Q6FXI5"/>
<dbReference type="FunCoup" id="Q6FXI5">
    <property type="interactions" value="135"/>
</dbReference>
<dbReference type="STRING" id="284593.Q6FXI5"/>
<dbReference type="EnsemblFungi" id="CAGL0B03641g-T">
    <property type="protein sequence ID" value="CAGL0B03641g-T-p1"/>
    <property type="gene ID" value="CAGL0B03641g"/>
</dbReference>
<dbReference type="KEGG" id="cgr:2886646"/>
<dbReference type="CGD" id="CAL0127858">
    <property type="gene designation" value="CAGL0B03641g"/>
</dbReference>
<dbReference type="VEuPathDB" id="FungiDB:CAGL0B03641g"/>
<dbReference type="eggNOG" id="KOG0243">
    <property type="taxonomic scope" value="Eukaryota"/>
</dbReference>
<dbReference type="HOGENOM" id="CLU_001485_33_3_1"/>
<dbReference type="InParanoid" id="Q6FXI5"/>
<dbReference type="OMA" id="EVQECKR"/>
<dbReference type="Proteomes" id="UP000002428">
    <property type="component" value="Chromosome B"/>
</dbReference>
<dbReference type="GO" id="GO:0000235">
    <property type="term" value="C:astral microtubule"/>
    <property type="evidence" value="ECO:0007669"/>
    <property type="project" value="EnsemblFungi"/>
</dbReference>
<dbReference type="GO" id="GO:0000776">
    <property type="term" value="C:kinetochore"/>
    <property type="evidence" value="ECO:0007669"/>
    <property type="project" value="EnsemblFungi"/>
</dbReference>
<dbReference type="GO" id="GO:0005828">
    <property type="term" value="C:kinetochore microtubule"/>
    <property type="evidence" value="ECO:0007669"/>
    <property type="project" value="EnsemblFungi"/>
</dbReference>
<dbReference type="GO" id="GO:0072686">
    <property type="term" value="C:mitotic spindle"/>
    <property type="evidence" value="ECO:0007669"/>
    <property type="project" value="TreeGrafter"/>
</dbReference>
<dbReference type="GO" id="GO:0005634">
    <property type="term" value="C:nucleus"/>
    <property type="evidence" value="ECO:0007669"/>
    <property type="project" value="TreeGrafter"/>
</dbReference>
<dbReference type="GO" id="GO:0005524">
    <property type="term" value="F:ATP binding"/>
    <property type="evidence" value="ECO:0007669"/>
    <property type="project" value="UniProtKB-KW"/>
</dbReference>
<dbReference type="GO" id="GO:0008017">
    <property type="term" value="F:microtubule binding"/>
    <property type="evidence" value="ECO:0007669"/>
    <property type="project" value="InterPro"/>
</dbReference>
<dbReference type="GO" id="GO:0008569">
    <property type="term" value="F:minus-end-directed microtubule motor activity"/>
    <property type="evidence" value="ECO:0007669"/>
    <property type="project" value="EnsemblFungi"/>
</dbReference>
<dbReference type="GO" id="GO:0008574">
    <property type="term" value="F:plus-end-directed microtubule motor activity"/>
    <property type="evidence" value="ECO:0007669"/>
    <property type="project" value="EnsemblFungi"/>
</dbReference>
<dbReference type="GO" id="GO:0051301">
    <property type="term" value="P:cell division"/>
    <property type="evidence" value="ECO:0007669"/>
    <property type="project" value="UniProtKB-KW"/>
</dbReference>
<dbReference type="GO" id="GO:0000073">
    <property type="term" value="P:initial mitotic spindle pole body separation"/>
    <property type="evidence" value="ECO:0007669"/>
    <property type="project" value="EnsemblFungi"/>
</dbReference>
<dbReference type="GO" id="GO:0045144">
    <property type="term" value="P:meiotic sister chromatid segregation"/>
    <property type="evidence" value="ECO:0007669"/>
    <property type="project" value="EnsemblFungi"/>
</dbReference>
<dbReference type="GO" id="GO:0007019">
    <property type="term" value="P:microtubule depolymerization"/>
    <property type="evidence" value="ECO:0007669"/>
    <property type="project" value="EnsemblFungi"/>
</dbReference>
<dbReference type="GO" id="GO:0007018">
    <property type="term" value="P:microtubule-based movement"/>
    <property type="evidence" value="ECO:0007669"/>
    <property type="project" value="InterPro"/>
</dbReference>
<dbReference type="GO" id="GO:0061805">
    <property type="term" value="P:mitotic spindle elongation (spindle phase three)"/>
    <property type="evidence" value="ECO:0000250"/>
    <property type="project" value="UniProtKB"/>
</dbReference>
<dbReference type="GO" id="GO:0033047">
    <property type="term" value="P:regulation of mitotic sister chromatid segregation"/>
    <property type="evidence" value="ECO:0007669"/>
    <property type="project" value="EnsemblFungi"/>
</dbReference>
<dbReference type="Gene3D" id="3.40.850.10">
    <property type="entry name" value="Kinesin motor domain"/>
    <property type="match status" value="2"/>
</dbReference>
<dbReference type="InterPro" id="IPR047149">
    <property type="entry name" value="KIF11-like"/>
</dbReference>
<dbReference type="InterPro" id="IPR019821">
    <property type="entry name" value="Kinesin_motor_CS"/>
</dbReference>
<dbReference type="InterPro" id="IPR001752">
    <property type="entry name" value="Kinesin_motor_dom"/>
</dbReference>
<dbReference type="InterPro" id="IPR036961">
    <property type="entry name" value="Kinesin_motor_dom_sf"/>
</dbReference>
<dbReference type="InterPro" id="IPR027417">
    <property type="entry name" value="P-loop_NTPase"/>
</dbReference>
<dbReference type="PANTHER" id="PTHR47970:SF12">
    <property type="entry name" value="KINESIN FAMILY MEMBER 11"/>
    <property type="match status" value="1"/>
</dbReference>
<dbReference type="PANTHER" id="PTHR47970">
    <property type="entry name" value="KINESIN-LIKE PROTEIN KIF11"/>
    <property type="match status" value="1"/>
</dbReference>
<dbReference type="Pfam" id="PF00225">
    <property type="entry name" value="Kinesin"/>
    <property type="match status" value="2"/>
</dbReference>
<dbReference type="PRINTS" id="PR00380">
    <property type="entry name" value="KINESINHEAVY"/>
</dbReference>
<dbReference type="SMART" id="SM00129">
    <property type="entry name" value="KISc"/>
    <property type="match status" value="1"/>
</dbReference>
<dbReference type="SUPFAM" id="SSF52540">
    <property type="entry name" value="P-loop containing nucleoside triphosphate hydrolases"/>
    <property type="match status" value="1"/>
</dbReference>
<dbReference type="PROSITE" id="PS00411">
    <property type="entry name" value="KINESIN_MOTOR_1"/>
    <property type="match status" value="1"/>
</dbReference>
<dbReference type="PROSITE" id="PS50067">
    <property type="entry name" value="KINESIN_MOTOR_2"/>
    <property type="match status" value="1"/>
</dbReference>
<reference key="1">
    <citation type="journal article" date="2004" name="Nature">
        <title>Genome evolution in yeasts.</title>
        <authorList>
            <person name="Dujon B."/>
            <person name="Sherman D."/>
            <person name="Fischer G."/>
            <person name="Durrens P."/>
            <person name="Casaregola S."/>
            <person name="Lafontaine I."/>
            <person name="de Montigny J."/>
            <person name="Marck C."/>
            <person name="Neuveglise C."/>
            <person name="Talla E."/>
            <person name="Goffard N."/>
            <person name="Frangeul L."/>
            <person name="Aigle M."/>
            <person name="Anthouard V."/>
            <person name="Babour A."/>
            <person name="Barbe V."/>
            <person name="Barnay S."/>
            <person name="Blanchin S."/>
            <person name="Beckerich J.-M."/>
            <person name="Beyne E."/>
            <person name="Bleykasten C."/>
            <person name="Boisrame A."/>
            <person name="Boyer J."/>
            <person name="Cattolico L."/>
            <person name="Confanioleri F."/>
            <person name="de Daruvar A."/>
            <person name="Despons L."/>
            <person name="Fabre E."/>
            <person name="Fairhead C."/>
            <person name="Ferry-Dumazet H."/>
            <person name="Groppi A."/>
            <person name="Hantraye F."/>
            <person name="Hennequin C."/>
            <person name="Jauniaux N."/>
            <person name="Joyet P."/>
            <person name="Kachouri R."/>
            <person name="Kerrest A."/>
            <person name="Koszul R."/>
            <person name="Lemaire M."/>
            <person name="Lesur I."/>
            <person name="Ma L."/>
            <person name="Muller H."/>
            <person name="Nicaud J.-M."/>
            <person name="Nikolski M."/>
            <person name="Oztas S."/>
            <person name="Ozier-Kalogeropoulos O."/>
            <person name="Pellenz S."/>
            <person name="Potier S."/>
            <person name="Richard G.-F."/>
            <person name="Straub M.-L."/>
            <person name="Suleau A."/>
            <person name="Swennen D."/>
            <person name="Tekaia F."/>
            <person name="Wesolowski-Louvel M."/>
            <person name="Westhof E."/>
            <person name="Wirth B."/>
            <person name="Zeniou-Meyer M."/>
            <person name="Zivanovic Y."/>
            <person name="Bolotin-Fukuhara M."/>
            <person name="Thierry A."/>
            <person name="Bouchier C."/>
            <person name="Caudron B."/>
            <person name="Scarpelli C."/>
            <person name="Gaillardin C."/>
            <person name="Weissenbach J."/>
            <person name="Wincker P."/>
            <person name="Souciet J.-L."/>
        </authorList>
    </citation>
    <scope>NUCLEOTIDE SEQUENCE [LARGE SCALE GENOMIC DNA]</scope>
    <source>
        <strain>ATCC 2001 / BCRC 20586 / JCM 3761 / NBRC 0622 / NRRL Y-65 / CBS 138</strain>
    </source>
</reference>
<name>CIN8_CANGA</name>
<organism>
    <name type="scientific">Candida glabrata (strain ATCC 2001 / BCRC 20586 / JCM 3761 / NBRC 0622 / NRRL Y-65 / CBS 138)</name>
    <name type="common">Yeast</name>
    <name type="synonym">Nakaseomyces glabratus</name>
    <dbReference type="NCBI Taxonomy" id="284593"/>
    <lineage>
        <taxon>Eukaryota</taxon>
        <taxon>Fungi</taxon>
        <taxon>Dikarya</taxon>
        <taxon>Ascomycota</taxon>
        <taxon>Saccharomycotina</taxon>
        <taxon>Saccharomycetes</taxon>
        <taxon>Saccharomycetales</taxon>
        <taxon>Saccharomycetaceae</taxon>
        <taxon>Nakaseomyces</taxon>
    </lineage>
</organism>